<gene>
    <name evidence="1" type="primary">eno</name>
    <name type="ordered locus">LVIS_0664</name>
</gene>
<accession>Q03SL5</accession>
<sequence length="439" mass="47676">MSIISDIYAREVLDSRGNPTVEVELYTEAGAMGRGIVPSGASTGEHEAVELRDGDKSRFMGKGVTKAVDNVNNIIAKEIIGYDVTDQRAIDQAMIDLDGTPNKGKLGANAILGVSLAAARAAADELGQPLYNYLGGFNGHVLPTPMMNVINGGKHANNKVDFQEFMIMPVGAKSVTEAIRMGSETFHNLKNLLNEKGYSTAVGDEGGFAPDLKNNEEPFEILVEAIKNAGYVPGKDVAIAFDCASSEFYNADTKKYELVGDGKEYTAEEFVSLLESIVDKYPVVSIEDPLDENEWEDWQMATERLGKKVQLVGDDLFVTNTDYLAKGIKMGVGNSILIKLNQIGTLTETVEAVEMAKQAGYTAVISHRSGETEDTTIADLVVALNAGQIKTGSMSRGERIAKYNQLMRIEDQLGKTSEYKGIHSFYNLDEDARMAIVNK</sequence>
<proteinExistence type="inferred from homology"/>
<feature type="chain" id="PRO_0000280852" description="Enolase">
    <location>
        <begin position="1"/>
        <end position="439"/>
    </location>
</feature>
<feature type="active site" description="Proton donor" evidence="1">
    <location>
        <position position="205"/>
    </location>
</feature>
<feature type="active site" description="Proton acceptor" evidence="1">
    <location>
        <position position="339"/>
    </location>
</feature>
<feature type="binding site" evidence="1">
    <location>
        <position position="163"/>
    </location>
    <ligand>
        <name>(2R)-2-phosphoglycerate</name>
        <dbReference type="ChEBI" id="CHEBI:58289"/>
    </ligand>
</feature>
<feature type="binding site" evidence="1">
    <location>
        <position position="242"/>
    </location>
    <ligand>
        <name>Mg(2+)</name>
        <dbReference type="ChEBI" id="CHEBI:18420"/>
    </ligand>
</feature>
<feature type="binding site" evidence="1">
    <location>
        <position position="287"/>
    </location>
    <ligand>
        <name>Mg(2+)</name>
        <dbReference type="ChEBI" id="CHEBI:18420"/>
    </ligand>
</feature>
<feature type="binding site" evidence="1">
    <location>
        <position position="314"/>
    </location>
    <ligand>
        <name>Mg(2+)</name>
        <dbReference type="ChEBI" id="CHEBI:18420"/>
    </ligand>
</feature>
<feature type="binding site" evidence="1">
    <location>
        <position position="339"/>
    </location>
    <ligand>
        <name>(2R)-2-phosphoglycerate</name>
        <dbReference type="ChEBI" id="CHEBI:58289"/>
    </ligand>
</feature>
<feature type="binding site" evidence="1">
    <location>
        <position position="368"/>
    </location>
    <ligand>
        <name>(2R)-2-phosphoglycerate</name>
        <dbReference type="ChEBI" id="CHEBI:58289"/>
    </ligand>
</feature>
<feature type="binding site" evidence="1">
    <location>
        <position position="369"/>
    </location>
    <ligand>
        <name>(2R)-2-phosphoglycerate</name>
        <dbReference type="ChEBI" id="CHEBI:58289"/>
    </ligand>
</feature>
<feature type="binding site" evidence="1">
    <location>
        <position position="390"/>
    </location>
    <ligand>
        <name>(2R)-2-phosphoglycerate</name>
        <dbReference type="ChEBI" id="CHEBI:58289"/>
    </ligand>
</feature>
<evidence type="ECO:0000255" key="1">
    <source>
        <dbReference type="HAMAP-Rule" id="MF_00318"/>
    </source>
</evidence>
<organism>
    <name type="scientific">Levilactobacillus brevis (strain ATCC 367 / BCRC 12310 / CIP 105137 / JCM 1170 / LMG 11437 / NCIMB 947 / NCTC 947)</name>
    <name type="common">Lactobacillus brevis</name>
    <dbReference type="NCBI Taxonomy" id="387344"/>
    <lineage>
        <taxon>Bacteria</taxon>
        <taxon>Bacillati</taxon>
        <taxon>Bacillota</taxon>
        <taxon>Bacilli</taxon>
        <taxon>Lactobacillales</taxon>
        <taxon>Lactobacillaceae</taxon>
        <taxon>Levilactobacillus</taxon>
    </lineage>
</organism>
<name>ENO_LEVBA</name>
<dbReference type="EC" id="4.2.1.11" evidence="1"/>
<dbReference type="EMBL" id="CP000416">
    <property type="protein sequence ID" value="ABJ63807.1"/>
    <property type="molecule type" value="Genomic_DNA"/>
</dbReference>
<dbReference type="RefSeq" id="WP_011667439.1">
    <property type="nucleotide sequence ID" value="NC_008497.1"/>
</dbReference>
<dbReference type="SMR" id="Q03SL5"/>
<dbReference type="STRING" id="387344.LVIS_0664"/>
<dbReference type="KEGG" id="lbr:LVIS_0664"/>
<dbReference type="eggNOG" id="COG0148">
    <property type="taxonomic scope" value="Bacteria"/>
</dbReference>
<dbReference type="HOGENOM" id="CLU_031223_2_1_9"/>
<dbReference type="UniPathway" id="UPA00109">
    <property type="reaction ID" value="UER00187"/>
</dbReference>
<dbReference type="Proteomes" id="UP000001652">
    <property type="component" value="Chromosome"/>
</dbReference>
<dbReference type="GO" id="GO:0009986">
    <property type="term" value="C:cell surface"/>
    <property type="evidence" value="ECO:0007669"/>
    <property type="project" value="UniProtKB-SubCell"/>
</dbReference>
<dbReference type="GO" id="GO:0005576">
    <property type="term" value="C:extracellular region"/>
    <property type="evidence" value="ECO:0007669"/>
    <property type="project" value="UniProtKB-SubCell"/>
</dbReference>
<dbReference type="GO" id="GO:0000015">
    <property type="term" value="C:phosphopyruvate hydratase complex"/>
    <property type="evidence" value="ECO:0007669"/>
    <property type="project" value="InterPro"/>
</dbReference>
<dbReference type="GO" id="GO:0000287">
    <property type="term" value="F:magnesium ion binding"/>
    <property type="evidence" value="ECO:0007669"/>
    <property type="project" value="UniProtKB-UniRule"/>
</dbReference>
<dbReference type="GO" id="GO:0004634">
    <property type="term" value="F:phosphopyruvate hydratase activity"/>
    <property type="evidence" value="ECO:0007669"/>
    <property type="project" value="UniProtKB-UniRule"/>
</dbReference>
<dbReference type="GO" id="GO:0006096">
    <property type="term" value="P:glycolytic process"/>
    <property type="evidence" value="ECO:0007669"/>
    <property type="project" value="UniProtKB-UniRule"/>
</dbReference>
<dbReference type="CDD" id="cd03313">
    <property type="entry name" value="enolase"/>
    <property type="match status" value="1"/>
</dbReference>
<dbReference type="FunFam" id="3.20.20.120:FF:000001">
    <property type="entry name" value="Enolase"/>
    <property type="match status" value="1"/>
</dbReference>
<dbReference type="FunFam" id="3.30.390.10:FF:000001">
    <property type="entry name" value="Enolase"/>
    <property type="match status" value="1"/>
</dbReference>
<dbReference type="Gene3D" id="3.20.20.120">
    <property type="entry name" value="Enolase-like C-terminal domain"/>
    <property type="match status" value="1"/>
</dbReference>
<dbReference type="Gene3D" id="3.30.390.10">
    <property type="entry name" value="Enolase-like, N-terminal domain"/>
    <property type="match status" value="1"/>
</dbReference>
<dbReference type="HAMAP" id="MF_00318">
    <property type="entry name" value="Enolase"/>
    <property type="match status" value="1"/>
</dbReference>
<dbReference type="InterPro" id="IPR000941">
    <property type="entry name" value="Enolase"/>
</dbReference>
<dbReference type="InterPro" id="IPR036849">
    <property type="entry name" value="Enolase-like_C_sf"/>
</dbReference>
<dbReference type="InterPro" id="IPR029017">
    <property type="entry name" value="Enolase-like_N"/>
</dbReference>
<dbReference type="InterPro" id="IPR020810">
    <property type="entry name" value="Enolase_C"/>
</dbReference>
<dbReference type="InterPro" id="IPR020809">
    <property type="entry name" value="Enolase_CS"/>
</dbReference>
<dbReference type="InterPro" id="IPR020811">
    <property type="entry name" value="Enolase_N"/>
</dbReference>
<dbReference type="NCBIfam" id="TIGR01060">
    <property type="entry name" value="eno"/>
    <property type="match status" value="1"/>
</dbReference>
<dbReference type="PANTHER" id="PTHR11902">
    <property type="entry name" value="ENOLASE"/>
    <property type="match status" value="1"/>
</dbReference>
<dbReference type="PANTHER" id="PTHR11902:SF1">
    <property type="entry name" value="ENOLASE"/>
    <property type="match status" value="1"/>
</dbReference>
<dbReference type="Pfam" id="PF00113">
    <property type="entry name" value="Enolase_C"/>
    <property type="match status" value="1"/>
</dbReference>
<dbReference type="Pfam" id="PF03952">
    <property type="entry name" value="Enolase_N"/>
    <property type="match status" value="1"/>
</dbReference>
<dbReference type="PIRSF" id="PIRSF001400">
    <property type="entry name" value="Enolase"/>
    <property type="match status" value="1"/>
</dbReference>
<dbReference type="PRINTS" id="PR00148">
    <property type="entry name" value="ENOLASE"/>
</dbReference>
<dbReference type="SFLD" id="SFLDS00001">
    <property type="entry name" value="Enolase"/>
    <property type="match status" value="1"/>
</dbReference>
<dbReference type="SFLD" id="SFLDF00002">
    <property type="entry name" value="enolase"/>
    <property type="match status" value="1"/>
</dbReference>
<dbReference type="SMART" id="SM01192">
    <property type="entry name" value="Enolase_C"/>
    <property type="match status" value="1"/>
</dbReference>
<dbReference type="SMART" id="SM01193">
    <property type="entry name" value="Enolase_N"/>
    <property type="match status" value="1"/>
</dbReference>
<dbReference type="SUPFAM" id="SSF51604">
    <property type="entry name" value="Enolase C-terminal domain-like"/>
    <property type="match status" value="1"/>
</dbReference>
<dbReference type="SUPFAM" id="SSF54826">
    <property type="entry name" value="Enolase N-terminal domain-like"/>
    <property type="match status" value="1"/>
</dbReference>
<dbReference type="PROSITE" id="PS00164">
    <property type="entry name" value="ENOLASE"/>
    <property type="match status" value="1"/>
</dbReference>
<keyword id="KW-0963">Cytoplasm</keyword>
<keyword id="KW-0324">Glycolysis</keyword>
<keyword id="KW-0456">Lyase</keyword>
<keyword id="KW-0460">Magnesium</keyword>
<keyword id="KW-0479">Metal-binding</keyword>
<keyword id="KW-1185">Reference proteome</keyword>
<keyword id="KW-0964">Secreted</keyword>
<comment type="function">
    <text evidence="1">Catalyzes the reversible conversion of 2-phosphoglycerate (2-PG) into phosphoenolpyruvate (PEP). It is essential for the degradation of carbohydrates via glycolysis.</text>
</comment>
<comment type="catalytic activity">
    <reaction evidence="1">
        <text>(2R)-2-phosphoglycerate = phosphoenolpyruvate + H2O</text>
        <dbReference type="Rhea" id="RHEA:10164"/>
        <dbReference type="ChEBI" id="CHEBI:15377"/>
        <dbReference type="ChEBI" id="CHEBI:58289"/>
        <dbReference type="ChEBI" id="CHEBI:58702"/>
        <dbReference type="EC" id="4.2.1.11"/>
    </reaction>
</comment>
<comment type="cofactor">
    <cofactor evidence="1">
        <name>Mg(2+)</name>
        <dbReference type="ChEBI" id="CHEBI:18420"/>
    </cofactor>
    <text evidence="1">Binds a second Mg(2+) ion via substrate during catalysis.</text>
</comment>
<comment type="pathway">
    <text evidence="1">Carbohydrate degradation; glycolysis; pyruvate from D-glyceraldehyde 3-phosphate: step 4/5.</text>
</comment>
<comment type="subcellular location">
    <subcellularLocation>
        <location evidence="1">Cytoplasm</location>
    </subcellularLocation>
    <subcellularLocation>
        <location evidence="1">Secreted</location>
    </subcellularLocation>
    <subcellularLocation>
        <location evidence="1">Cell surface</location>
    </subcellularLocation>
    <text evidence="1">Fractions of enolase are present in both the cytoplasm and on the cell surface.</text>
</comment>
<comment type="similarity">
    <text evidence="1">Belongs to the enolase family.</text>
</comment>
<protein>
    <recommendedName>
        <fullName evidence="1">Enolase</fullName>
        <ecNumber evidence="1">4.2.1.11</ecNumber>
    </recommendedName>
    <alternativeName>
        <fullName evidence="1">2-phospho-D-glycerate hydro-lyase</fullName>
    </alternativeName>
    <alternativeName>
        <fullName evidence="1">2-phosphoglycerate dehydratase</fullName>
    </alternativeName>
</protein>
<reference key="1">
    <citation type="journal article" date="2006" name="Proc. Natl. Acad. Sci. U.S.A.">
        <title>Comparative genomics of the lactic acid bacteria.</title>
        <authorList>
            <person name="Makarova K.S."/>
            <person name="Slesarev A."/>
            <person name="Wolf Y.I."/>
            <person name="Sorokin A."/>
            <person name="Mirkin B."/>
            <person name="Koonin E.V."/>
            <person name="Pavlov A."/>
            <person name="Pavlova N."/>
            <person name="Karamychev V."/>
            <person name="Polouchine N."/>
            <person name="Shakhova V."/>
            <person name="Grigoriev I."/>
            <person name="Lou Y."/>
            <person name="Rohksar D."/>
            <person name="Lucas S."/>
            <person name="Huang K."/>
            <person name="Goodstein D.M."/>
            <person name="Hawkins T."/>
            <person name="Plengvidhya V."/>
            <person name="Welker D."/>
            <person name="Hughes J."/>
            <person name="Goh Y."/>
            <person name="Benson A."/>
            <person name="Baldwin K."/>
            <person name="Lee J.-H."/>
            <person name="Diaz-Muniz I."/>
            <person name="Dosti B."/>
            <person name="Smeianov V."/>
            <person name="Wechter W."/>
            <person name="Barabote R."/>
            <person name="Lorca G."/>
            <person name="Altermann E."/>
            <person name="Barrangou R."/>
            <person name="Ganesan B."/>
            <person name="Xie Y."/>
            <person name="Rawsthorne H."/>
            <person name="Tamir D."/>
            <person name="Parker C."/>
            <person name="Breidt F."/>
            <person name="Broadbent J.R."/>
            <person name="Hutkins R."/>
            <person name="O'Sullivan D."/>
            <person name="Steele J."/>
            <person name="Unlu G."/>
            <person name="Saier M.H. Jr."/>
            <person name="Klaenhammer T."/>
            <person name="Richardson P."/>
            <person name="Kozyavkin S."/>
            <person name="Weimer B.C."/>
            <person name="Mills D.A."/>
        </authorList>
    </citation>
    <scope>NUCLEOTIDE SEQUENCE [LARGE SCALE GENOMIC DNA]</scope>
    <source>
        <strain>ATCC 367 / BCRC 12310 / CIP 105137 / JCM 1170 / LMG 11437 / NCIMB 947 / NCTC 947</strain>
    </source>
</reference>